<sequence>MSAQEIKGLGMIPMVIEQSGRGERSYDIYSRLLKERIIFLVGEVNDQTANLVVAQLLFLESENPDKDISFYINSPGGSVSAGMAIYDTMQFIKPDVSTMCIGFAASMGAFLLAAGEKGKRFSLPNSKIMIHQVLGGARGQATDIEIHARDILRTKDQMNRILAERTGQPLEKVKSDTERDYFLTADEAKDYGLVDQVIAKRS</sequence>
<comment type="function">
    <text evidence="1">Cleaves peptides in various proteins in a process that requires ATP hydrolysis. Has a chymotrypsin-like activity. Plays a major role in the degradation of misfolded proteins.</text>
</comment>
<comment type="catalytic activity">
    <reaction evidence="1">
        <text>Hydrolysis of proteins to small peptides in the presence of ATP and magnesium. alpha-casein is the usual test substrate. In the absence of ATP, only oligopeptides shorter than five residues are hydrolyzed (such as succinyl-Leu-Tyr-|-NHMec, and Leu-Tyr-Leu-|-Tyr-Trp, in which cleavage of the -Tyr-|-Leu- and -Tyr-|-Trp bonds also occurs).</text>
        <dbReference type="EC" id="3.4.21.92"/>
    </reaction>
</comment>
<comment type="subunit">
    <text evidence="1">Fourteen ClpP subunits assemble into 2 heptameric rings which stack back to back to give a disk-like structure with a central cavity, resembling the structure of eukaryotic proteasomes.</text>
</comment>
<comment type="subcellular location">
    <subcellularLocation>
        <location evidence="1">Cytoplasm</location>
    </subcellularLocation>
</comment>
<comment type="similarity">
    <text evidence="1">Belongs to the peptidase S14 family.</text>
</comment>
<dbReference type="EC" id="3.4.21.92" evidence="1"/>
<dbReference type="EMBL" id="CP001635">
    <property type="protein sequence ID" value="ACS19137.1"/>
    <property type="molecule type" value="Genomic_DNA"/>
</dbReference>
<dbReference type="SMR" id="C5CJT4"/>
<dbReference type="STRING" id="543728.Vapar_2511"/>
<dbReference type="KEGG" id="vap:Vapar_2511"/>
<dbReference type="eggNOG" id="COG0740">
    <property type="taxonomic scope" value="Bacteria"/>
</dbReference>
<dbReference type="HOGENOM" id="CLU_058707_3_2_4"/>
<dbReference type="OrthoDB" id="9802800at2"/>
<dbReference type="GO" id="GO:0005737">
    <property type="term" value="C:cytoplasm"/>
    <property type="evidence" value="ECO:0007669"/>
    <property type="project" value="UniProtKB-SubCell"/>
</dbReference>
<dbReference type="GO" id="GO:0009368">
    <property type="term" value="C:endopeptidase Clp complex"/>
    <property type="evidence" value="ECO:0007669"/>
    <property type="project" value="TreeGrafter"/>
</dbReference>
<dbReference type="GO" id="GO:0004176">
    <property type="term" value="F:ATP-dependent peptidase activity"/>
    <property type="evidence" value="ECO:0007669"/>
    <property type="project" value="InterPro"/>
</dbReference>
<dbReference type="GO" id="GO:0051117">
    <property type="term" value="F:ATPase binding"/>
    <property type="evidence" value="ECO:0007669"/>
    <property type="project" value="TreeGrafter"/>
</dbReference>
<dbReference type="GO" id="GO:0004252">
    <property type="term" value="F:serine-type endopeptidase activity"/>
    <property type="evidence" value="ECO:0007669"/>
    <property type="project" value="UniProtKB-UniRule"/>
</dbReference>
<dbReference type="GO" id="GO:0006515">
    <property type="term" value="P:protein quality control for misfolded or incompletely synthesized proteins"/>
    <property type="evidence" value="ECO:0007669"/>
    <property type="project" value="TreeGrafter"/>
</dbReference>
<dbReference type="CDD" id="cd07017">
    <property type="entry name" value="S14_ClpP_2"/>
    <property type="match status" value="1"/>
</dbReference>
<dbReference type="FunFam" id="3.90.226.10:FF:000001">
    <property type="entry name" value="ATP-dependent Clp protease proteolytic subunit"/>
    <property type="match status" value="1"/>
</dbReference>
<dbReference type="Gene3D" id="3.90.226.10">
    <property type="entry name" value="2-enoyl-CoA Hydratase, Chain A, domain 1"/>
    <property type="match status" value="1"/>
</dbReference>
<dbReference type="HAMAP" id="MF_00444">
    <property type="entry name" value="ClpP"/>
    <property type="match status" value="1"/>
</dbReference>
<dbReference type="InterPro" id="IPR001907">
    <property type="entry name" value="ClpP"/>
</dbReference>
<dbReference type="InterPro" id="IPR029045">
    <property type="entry name" value="ClpP/crotonase-like_dom_sf"/>
</dbReference>
<dbReference type="InterPro" id="IPR023562">
    <property type="entry name" value="ClpP/TepA"/>
</dbReference>
<dbReference type="InterPro" id="IPR018215">
    <property type="entry name" value="ClpP_Ser_AS"/>
</dbReference>
<dbReference type="NCBIfam" id="TIGR00493">
    <property type="entry name" value="clpP"/>
    <property type="match status" value="1"/>
</dbReference>
<dbReference type="NCBIfam" id="NF001368">
    <property type="entry name" value="PRK00277.1"/>
    <property type="match status" value="1"/>
</dbReference>
<dbReference type="NCBIfam" id="NF009205">
    <property type="entry name" value="PRK12553.1"/>
    <property type="match status" value="1"/>
</dbReference>
<dbReference type="PANTHER" id="PTHR10381">
    <property type="entry name" value="ATP-DEPENDENT CLP PROTEASE PROTEOLYTIC SUBUNIT"/>
    <property type="match status" value="1"/>
</dbReference>
<dbReference type="PANTHER" id="PTHR10381:SF70">
    <property type="entry name" value="ATP-DEPENDENT CLP PROTEASE PROTEOLYTIC SUBUNIT"/>
    <property type="match status" value="1"/>
</dbReference>
<dbReference type="Pfam" id="PF00574">
    <property type="entry name" value="CLP_protease"/>
    <property type="match status" value="1"/>
</dbReference>
<dbReference type="PRINTS" id="PR00127">
    <property type="entry name" value="CLPPROTEASEP"/>
</dbReference>
<dbReference type="SUPFAM" id="SSF52096">
    <property type="entry name" value="ClpP/crotonase"/>
    <property type="match status" value="1"/>
</dbReference>
<dbReference type="PROSITE" id="PS00381">
    <property type="entry name" value="CLP_PROTEASE_SER"/>
    <property type="match status" value="1"/>
</dbReference>
<keyword id="KW-0963">Cytoplasm</keyword>
<keyword id="KW-0378">Hydrolase</keyword>
<keyword id="KW-0645">Protease</keyword>
<keyword id="KW-0720">Serine protease</keyword>
<gene>
    <name evidence="1" type="primary">clpP</name>
    <name type="ordered locus">Vapar_2511</name>
</gene>
<proteinExistence type="inferred from homology"/>
<reference key="1">
    <citation type="journal article" date="2011" name="J. Bacteriol.">
        <title>Complete genome sequence of the metabolically versatile plant growth-promoting endophyte, Variovorax paradoxus S110.</title>
        <authorList>
            <person name="Han J.I."/>
            <person name="Choi H.K."/>
            <person name="Lee S.W."/>
            <person name="Orwin P.M."/>
            <person name="Kim J."/>
            <person name="Laroe S.L."/>
            <person name="Kim T.G."/>
            <person name="O'Neil J."/>
            <person name="Leadbetter J.R."/>
            <person name="Lee S.Y."/>
            <person name="Hur C.G."/>
            <person name="Spain J.C."/>
            <person name="Ovchinnikova G."/>
            <person name="Goodwin L."/>
            <person name="Han C."/>
        </authorList>
    </citation>
    <scope>NUCLEOTIDE SEQUENCE [LARGE SCALE GENOMIC DNA]</scope>
    <source>
        <strain>S110</strain>
    </source>
</reference>
<organism>
    <name type="scientific">Variovorax paradoxus (strain S110)</name>
    <dbReference type="NCBI Taxonomy" id="543728"/>
    <lineage>
        <taxon>Bacteria</taxon>
        <taxon>Pseudomonadati</taxon>
        <taxon>Pseudomonadota</taxon>
        <taxon>Betaproteobacteria</taxon>
        <taxon>Burkholderiales</taxon>
        <taxon>Comamonadaceae</taxon>
        <taxon>Variovorax</taxon>
    </lineage>
</organism>
<evidence type="ECO:0000255" key="1">
    <source>
        <dbReference type="HAMAP-Rule" id="MF_00444"/>
    </source>
</evidence>
<accession>C5CJT4</accession>
<name>CLPP_VARPS</name>
<protein>
    <recommendedName>
        <fullName evidence="1">ATP-dependent Clp protease proteolytic subunit</fullName>
        <ecNumber evidence="1">3.4.21.92</ecNumber>
    </recommendedName>
    <alternativeName>
        <fullName evidence="1">Endopeptidase Clp</fullName>
    </alternativeName>
</protein>
<feature type="chain" id="PRO_1000206165" description="ATP-dependent Clp protease proteolytic subunit">
    <location>
        <begin position="1"/>
        <end position="202"/>
    </location>
</feature>
<feature type="active site" description="Nucleophile" evidence="1">
    <location>
        <position position="106"/>
    </location>
</feature>
<feature type="active site" evidence="1">
    <location>
        <position position="131"/>
    </location>
</feature>